<protein>
    <recommendedName>
        <fullName evidence="1">Transaldolase</fullName>
        <ecNumber evidence="1">2.2.1.2</ecNumber>
    </recommendedName>
</protein>
<gene>
    <name evidence="1" type="primary">tal</name>
    <name type="ordered locus">MLBr00582</name>
</gene>
<keyword id="KW-0963">Cytoplasm</keyword>
<keyword id="KW-0570">Pentose shunt</keyword>
<keyword id="KW-0704">Schiff base</keyword>
<keyword id="KW-0808">Transferase</keyword>
<reference key="1">
    <citation type="journal article" date="2009" name="Nat. Genet.">
        <title>Comparative genomic and phylogeographic analysis of Mycobacterium leprae.</title>
        <authorList>
            <person name="Monot M."/>
            <person name="Honore N."/>
            <person name="Garnier T."/>
            <person name="Zidane N."/>
            <person name="Sherafi D."/>
            <person name="Paniz-Mondolfi A."/>
            <person name="Matsuoka M."/>
            <person name="Taylor G.M."/>
            <person name="Donoghue H.D."/>
            <person name="Bouwman A."/>
            <person name="Mays S."/>
            <person name="Watson C."/>
            <person name="Lockwood D."/>
            <person name="Khamispour A."/>
            <person name="Dowlati Y."/>
            <person name="Jianping S."/>
            <person name="Rea T.H."/>
            <person name="Vera-Cabrera L."/>
            <person name="Stefani M.M."/>
            <person name="Banu S."/>
            <person name="Macdonald M."/>
            <person name="Sapkota B.R."/>
            <person name="Spencer J.S."/>
            <person name="Thomas J."/>
            <person name="Harshman K."/>
            <person name="Singh P."/>
            <person name="Busso P."/>
            <person name="Gattiker A."/>
            <person name="Rougemont J."/>
            <person name="Brennan P.J."/>
            <person name="Cole S.T."/>
        </authorList>
    </citation>
    <scope>NUCLEOTIDE SEQUENCE [LARGE SCALE GENOMIC DNA]</scope>
    <source>
        <strain>Br4923</strain>
    </source>
</reference>
<proteinExistence type="inferred from homology"/>
<evidence type="ECO:0000255" key="1">
    <source>
        <dbReference type="HAMAP-Rule" id="MF_00493"/>
    </source>
</evidence>
<name>TAL_MYCLB</name>
<organism>
    <name type="scientific">Mycobacterium leprae (strain Br4923)</name>
    <dbReference type="NCBI Taxonomy" id="561304"/>
    <lineage>
        <taxon>Bacteria</taxon>
        <taxon>Bacillati</taxon>
        <taxon>Actinomycetota</taxon>
        <taxon>Actinomycetes</taxon>
        <taxon>Mycobacteriales</taxon>
        <taxon>Mycobacteriaceae</taxon>
        <taxon>Mycobacterium</taxon>
    </lineage>
</organism>
<feature type="chain" id="PRO_1000198459" description="Transaldolase">
    <location>
        <begin position="1"/>
        <end position="375"/>
    </location>
</feature>
<feature type="active site" description="Schiff-base intermediate with substrate" evidence="1">
    <location>
        <position position="145"/>
    </location>
</feature>
<accession>B8ZUQ2</accession>
<sequence length="375" mass="40588">MTSKIQNPNLAALSAAGVSVWLDDLSRDRLQSGNLQKLIDTKSVVGVTTNPSIFQKAFANGHAYDAQIAELAKRGANVDVTVRTVTTDDVRHACDVLACEWEASHGKDGRVSIEVDPRLAHDTDKTIAQAVELWRIVDHPNLFIKIPATKAGLPAITAVLAEGISVNVTLIFSVQRHREVIDAYLAGIEKAAEAGRDLSKIVSVASFFVSRVDTEIDKRLEKLGSEQALALRGQAGVANARLAYAAYQKAFEGGQRYQTLMARGAQVQRPLWASTGVKNPDYADTLYVTELVAPNTVNTMPETTIDAVADHGVIRGDTISGTTLSSQKVFDSLVAVGVDLIDVFAVLEHEGVQKFVKSWNELLKETQEQLDSVAK</sequence>
<comment type="function">
    <text evidence="1">Transaldolase is important for the balance of metabolites in the pentose-phosphate pathway.</text>
</comment>
<comment type="catalytic activity">
    <reaction evidence="1">
        <text>D-sedoheptulose 7-phosphate + D-glyceraldehyde 3-phosphate = D-erythrose 4-phosphate + beta-D-fructose 6-phosphate</text>
        <dbReference type="Rhea" id="RHEA:17053"/>
        <dbReference type="ChEBI" id="CHEBI:16897"/>
        <dbReference type="ChEBI" id="CHEBI:57483"/>
        <dbReference type="ChEBI" id="CHEBI:57634"/>
        <dbReference type="ChEBI" id="CHEBI:59776"/>
        <dbReference type="EC" id="2.2.1.2"/>
    </reaction>
</comment>
<comment type="pathway">
    <text evidence="1">Carbohydrate degradation; pentose phosphate pathway; D-glyceraldehyde 3-phosphate and beta-D-fructose 6-phosphate from D-ribose 5-phosphate and D-xylulose 5-phosphate (non-oxidative stage): step 2/3.</text>
</comment>
<comment type="subcellular location">
    <subcellularLocation>
        <location evidence="1">Cytoplasm</location>
    </subcellularLocation>
</comment>
<comment type="similarity">
    <text evidence="1">Belongs to the transaldolase family. Type 2 subfamily.</text>
</comment>
<dbReference type="EC" id="2.2.1.2" evidence="1"/>
<dbReference type="EMBL" id="FM211192">
    <property type="protein sequence ID" value="CAR70675.1"/>
    <property type="molecule type" value="Genomic_DNA"/>
</dbReference>
<dbReference type="SMR" id="B8ZUQ2"/>
<dbReference type="KEGG" id="mlb:MLBr00582"/>
<dbReference type="HOGENOM" id="CLU_050771_1_0_11"/>
<dbReference type="UniPathway" id="UPA00115">
    <property type="reaction ID" value="UER00414"/>
</dbReference>
<dbReference type="Proteomes" id="UP000006900">
    <property type="component" value="Chromosome"/>
</dbReference>
<dbReference type="GO" id="GO:0005737">
    <property type="term" value="C:cytoplasm"/>
    <property type="evidence" value="ECO:0007669"/>
    <property type="project" value="UniProtKB-SubCell"/>
</dbReference>
<dbReference type="GO" id="GO:0004801">
    <property type="term" value="F:transaldolase activity"/>
    <property type="evidence" value="ECO:0007669"/>
    <property type="project" value="UniProtKB-UniRule"/>
</dbReference>
<dbReference type="GO" id="GO:0005975">
    <property type="term" value="P:carbohydrate metabolic process"/>
    <property type="evidence" value="ECO:0007669"/>
    <property type="project" value="InterPro"/>
</dbReference>
<dbReference type="GO" id="GO:0006098">
    <property type="term" value="P:pentose-phosphate shunt"/>
    <property type="evidence" value="ECO:0007669"/>
    <property type="project" value="UniProtKB-UniRule"/>
</dbReference>
<dbReference type="CDD" id="cd00955">
    <property type="entry name" value="Transaldolase_like"/>
    <property type="match status" value="1"/>
</dbReference>
<dbReference type="Gene3D" id="3.20.20.70">
    <property type="entry name" value="Aldolase class I"/>
    <property type="match status" value="1"/>
</dbReference>
<dbReference type="HAMAP" id="MF_00493">
    <property type="entry name" value="Transaldolase_2"/>
    <property type="match status" value="1"/>
</dbReference>
<dbReference type="InterPro" id="IPR013785">
    <property type="entry name" value="Aldolase_TIM"/>
</dbReference>
<dbReference type="InterPro" id="IPR001585">
    <property type="entry name" value="TAL/FSA"/>
</dbReference>
<dbReference type="InterPro" id="IPR004732">
    <property type="entry name" value="Transaldolase_2"/>
</dbReference>
<dbReference type="InterPro" id="IPR018225">
    <property type="entry name" value="Transaldolase_AS"/>
</dbReference>
<dbReference type="NCBIfam" id="NF002881">
    <property type="entry name" value="PRK03343.1"/>
    <property type="match status" value="1"/>
</dbReference>
<dbReference type="NCBIfam" id="TIGR00876">
    <property type="entry name" value="tal_mycobact"/>
    <property type="match status" value="1"/>
</dbReference>
<dbReference type="PANTHER" id="PTHR10683">
    <property type="entry name" value="TRANSALDOLASE"/>
    <property type="match status" value="1"/>
</dbReference>
<dbReference type="PANTHER" id="PTHR10683:SF31">
    <property type="entry name" value="TRANSALDOLASE"/>
    <property type="match status" value="1"/>
</dbReference>
<dbReference type="Pfam" id="PF00923">
    <property type="entry name" value="TAL_FSA"/>
    <property type="match status" value="1"/>
</dbReference>
<dbReference type="PIRSF" id="PIRSF036915">
    <property type="entry name" value="Trnald_Bac_Plnt"/>
    <property type="match status" value="1"/>
</dbReference>
<dbReference type="SUPFAM" id="SSF51569">
    <property type="entry name" value="Aldolase"/>
    <property type="match status" value="1"/>
</dbReference>
<dbReference type="PROSITE" id="PS01054">
    <property type="entry name" value="TRANSALDOLASE_1"/>
    <property type="match status" value="1"/>
</dbReference>
<dbReference type="PROSITE" id="PS00958">
    <property type="entry name" value="TRANSALDOLASE_2"/>
    <property type="match status" value="1"/>
</dbReference>